<organism>
    <name type="scientific">Bos taurus</name>
    <name type="common">Bovine</name>
    <dbReference type="NCBI Taxonomy" id="9913"/>
    <lineage>
        <taxon>Eukaryota</taxon>
        <taxon>Metazoa</taxon>
        <taxon>Chordata</taxon>
        <taxon>Craniata</taxon>
        <taxon>Vertebrata</taxon>
        <taxon>Euteleostomi</taxon>
        <taxon>Mammalia</taxon>
        <taxon>Eutheria</taxon>
        <taxon>Laurasiatheria</taxon>
        <taxon>Artiodactyla</taxon>
        <taxon>Ruminantia</taxon>
        <taxon>Pecora</taxon>
        <taxon>Bovidae</taxon>
        <taxon>Bovinae</taxon>
        <taxon>Bos</taxon>
    </lineage>
</organism>
<evidence type="ECO:0000250" key="1">
    <source>
        <dbReference type="UniProtKB" id="Q49A26"/>
    </source>
</evidence>
<evidence type="ECO:0000255" key="2">
    <source>
        <dbReference type="PROSITE-ProRule" id="PRU00162"/>
    </source>
</evidence>
<evidence type="ECO:0000256" key="3">
    <source>
        <dbReference type="SAM" id="MobiDB-lite"/>
    </source>
</evidence>
<evidence type="ECO:0000303" key="4">
    <source>
    </source>
</evidence>
<evidence type="ECO:0000305" key="5"/>
<accession>A4FUF0</accession>
<accession>Q58DC3</accession>
<dbReference type="EMBL" id="BT021674">
    <property type="protein sequence ID" value="AAX46521.1"/>
    <property type="molecule type" value="mRNA"/>
</dbReference>
<dbReference type="EMBL" id="BC114770">
    <property type="protein sequence ID" value="AAI14771.1"/>
    <property type="molecule type" value="mRNA"/>
</dbReference>
<dbReference type="RefSeq" id="NP_001035658.2">
    <molecule id="A4FUF0-1"/>
    <property type="nucleotide sequence ID" value="NM_001040568.2"/>
</dbReference>
<dbReference type="SMR" id="A4FUF0"/>
<dbReference type="FunCoup" id="A4FUF0">
    <property type="interactions" value="5001"/>
</dbReference>
<dbReference type="STRING" id="9913.ENSBTAP00000002268"/>
<dbReference type="PaxDb" id="9913-ENSBTAP00000002268"/>
<dbReference type="Ensembl" id="ENSBTAT00000002268.7">
    <molecule id="A4FUF0-1"/>
    <property type="protein sequence ID" value="ENSBTAP00000002268.5"/>
    <property type="gene ID" value="ENSBTAG00000001731.7"/>
</dbReference>
<dbReference type="GeneID" id="539636"/>
<dbReference type="KEGG" id="bta:539636"/>
<dbReference type="CTD" id="84656"/>
<dbReference type="VEuPathDB" id="HostDB:ENSBTAG00000001731"/>
<dbReference type="eggNOG" id="KOG0409">
    <property type="taxonomic scope" value="Eukaryota"/>
</dbReference>
<dbReference type="eggNOG" id="KOG1904">
    <property type="taxonomic scope" value="Eukaryota"/>
</dbReference>
<dbReference type="GeneTree" id="ENSGT00940000156435"/>
<dbReference type="HOGENOM" id="CLU_018075_0_0_1"/>
<dbReference type="InParanoid" id="A4FUF0"/>
<dbReference type="OMA" id="QMISGIT"/>
<dbReference type="OrthoDB" id="21615at2759"/>
<dbReference type="TreeFam" id="TF324195"/>
<dbReference type="Proteomes" id="UP000009136">
    <property type="component" value="Chromosome 25"/>
</dbReference>
<dbReference type="Bgee" id="ENSBTAG00000001731">
    <property type="expression patterns" value="Expressed in thymus and 105 other cell types or tissues"/>
</dbReference>
<dbReference type="GO" id="GO:0000785">
    <property type="term" value="C:chromatin"/>
    <property type="evidence" value="ECO:0000318"/>
    <property type="project" value="GO_Central"/>
</dbReference>
<dbReference type="GO" id="GO:0005829">
    <property type="term" value="C:cytosol"/>
    <property type="evidence" value="ECO:0007669"/>
    <property type="project" value="Ensembl"/>
</dbReference>
<dbReference type="GO" id="GO:0005654">
    <property type="term" value="C:nucleoplasm"/>
    <property type="evidence" value="ECO:0007669"/>
    <property type="project" value="Ensembl"/>
</dbReference>
<dbReference type="GO" id="GO:0000786">
    <property type="term" value="C:nucleosome"/>
    <property type="evidence" value="ECO:0000250"/>
    <property type="project" value="UniProtKB"/>
</dbReference>
<dbReference type="GO" id="GO:0140463">
    <property type="term" value="F:chromatin-protein adaptor activity"/>
    <property type="evidence" value="ECO:0007669"/>
    <property type="project" value="Ensembl"/>
</dbReference>
<dbReference type="GO" id="GO:0003677">
    <property type="term" value="F:DNA binding"/>
    <property type="evidence" value="ECO:0000318"/>
    <property type="project" value="GO_Central"/>
</dbReference>
<dbReference type="GO" id="GO:0042393">
    <property type="term" value="F:histone binding"/>
    <property type="evidence" value="ECO:0000250"/>
    <property type="project" value="UniProtKB"/>
</dbReference>
<dbReference type="GO" id="GO:0051287">
    <property type="term" value="F:NAD binding"/>
    <property type="evidence" value="ECO:0007669"/>
    <property type="project" value="InterPro"/>
</dbReference>
<dbReference type="GO" id="GO:0050661">
    <property type="term" value="F:NADP binding"/>
    <property type="evidence" value="ECO:0007669"/>
    <property type="project" value="InterPro"/>
</dbReference>
<dbReference type="GO" id="GO:0031491">
    <property type="term" value="F:nucleosome binding"/>
    <property type="evidence" value="ECO:0000318"/>
    <property type="project" value="GO_Central"/>
</dbReference>
<dbReference type="GO" id="GO:0140673">
    <property type="term" value="P:transcription elongation-coupled chromatin remodeling"/>
    <property type="evidence" value="ECO:0000318"/>
    <property type="project" value="GO_Central"/>
</dbReference>
<dbReference type="GO" id="GO:0045815">
    <property type="term" value="P:transcription initiation-coupled chromatin remodeling"/>
    <property type="evidence" value="ECO:0007669"/>
    <property type="project" value="Ensembl"/>
</dbReference>
<dbReference type="CDD" id="cd05836">
    <property type="entry name" value="PWWP_GLYR1"/>
    <property type="match status" value="1"/>
</dbReference>
<dbReference type="FunFam" id="3.40.50.720:FF:000058">
    <property type="entry name" value="Putative oxidoreductase GLYR1 homolog"/>
    <property type="match status" value="1"/>
</dbReference>
<dbReference type="FunFam" id="1.10.1040.10:FF:000011">
    <property type="entry name" value="putative oxidoreductase GLYR1 isoform X1"/>
    <property type="match status" value="1"/>
</dbReference>
<dbReference type="FunFam" id="2.30.30.140:FF:000027">
    <property type="entry name" value="putative oxidoreductase GLYR1 isoform X1"/>
    <property type="match status" value="1"/>
</dbReference>
<dbReference type="Gene3D" id="2.30.30.140">
    <property type="match status" value="1"/>
</dbReference>
<dbReference type="Gene3D" id="1.10.1040.10">
    <property type="entry name" value="N-(1-d-carboxylethyl)-l-norvaline Dehydrogenase, domain 2"/>
    <property type="match status" value="1"/>
</dbReference>
<dbReference type="Gene3D" id="3.40.50.720">
    <property type="entry name" value="NAD(P)-binding Rossmann-like Domain"/>
    <property type="match status" value="1"/>
</dbReference>
<dbReference type="InterPro" id="IPR008927">
    <property type="entry name" value="6-PGluconate_DH-like_C_sf"/>
</dbReference>
<dbReference type="InterPro" id="IPR013328">
    <property type="entry name" value="6PGD_dom2"/>
</dbReference>
<dbReference type="InterPro" id="IPR006115">
    <property type="entry name" value="6PGDH_NADP-bd"/>
</dbReference>
<dbReference type="InterPro" id="IPR035501">
    <property type="entry name" value="GLYR1_PWWP"/>
</dbReference>
<dbReference type="InterPro" id="IPR029154">
    <property type="entry name" value="HIBADH-like_NADP-bd"/>
</dbReference>
<dbReference type="InterPro" id="IPR051265">
    <property type="entry name" value="HIBADH-related_NP60_sf"/>
</dbReference>
<dbReference type="InterPro" id="IPR036291">
    <property type="entry name" value="NAD(P)-bd_dom_sf"/>
</dbReference>
<dbReference type="InterPro" id="IPR000313">
    <property type="entry name" value="PWWP_dom"/>
</dbReference>
<dbReference type="PANTHER" id="PTHR43580:SF2">
    <property type="entry name" value="CYTOKINE-LIKE NUCLEAR FACTOR N-PAC"/>
    <property type="match status" value="1"/>
</dbReference>
<dbReference type="PANTHER" id="PTHR43580">
    <property type="entry name" value="OXIDOREDUCTASE GLYR1-RELATED"/>
    <property type="match status" value="1"/>
</dbReference>
<dbReference type="Pfam" id="PF14833">
    <property type="entry name" value="NAD_binding_11"/>
    <property type="match status" value="1"/>
</dbReference>
<dbReference type="Pfam" id="PF03446">
    <property type="entry name" value="NAD_binding_2"/>
    <property type="match status" value="1"/>
</dbReference>
<dbReference type="Pfam" id="PF00855">
    <property type="entry name" value="PWWP"/>
    <property type="match status" value="1"/>
</dbReference>
<dbReference type="SMART" id="SM00293">
    <property type="entry name" value="PWWP"/>
    <property type="match status" value="1"/>
</dbReference>
<dbReference type="SUPFAM" id="SSF48179">
    <property type="entry name" value="6-phosphogluconate dehydrogenase C-terminal domain-like"/>
    <property type="match status" value="1"/>
</dbReference>
<dbReference type="SUPFAM" id="SSF51735">
    <property type="entry name" value="NAD(P)-binding Rossmann-fold domains"/>
    <property type="match status" value="1"/>
</dbReference>
<dbReference type="SUPFAM" id="SSF63748">
    <property type="entry name" value="Tudor/PWWP/MBT"/>
    <property type="match status" value="1"/>
</dbReference>
<dbReference type="PROSITE" id="PS50812">
    <property type="entry name" value="PWWP"/>
    <property type="match status" value="1"/>
</dbReference>
<proteinExistence type="evidence at transcript level"/>
<sequence>MAAVSLRLGDLVWGKLGRYPPWPGKIVNPPKDLKKPRGKKCFFVKFFGTEDHAWIKVEQLKPYHAHKEEMIKINKGKRFQQAVDAVEEFLRRAKGKDQTSSHSSADDKNRRNSSEERSRPISGDEKRKLSLSEGKVKKNMGEGKKRVPSGSSERGSKSPLKRAQEQSPRKRGRPPKDEKDLSIPESSTVKGMMAGPMATFKWQPNVSEPVKDADPHFHHFLLSQTEKPAVCYQAITKKLKICEEETGSTSIQAADSTAVNGSVTPTDKKIGFLGLGLMGSGIVSNLLKMGHTVTVWNRTAEKCDLFIQEGARLGRTPAEVVSTCDITFACVSDPKAAKDLVLGPSGVLQGIRPGKCYVDMSTVDADTVTELAQVIVSRGGRFLEAPVSGNQQLSNDGMLVILAAGDRGLYEDCSSCFQAMGKTSFFLGEVGNAAKMMLIVNMVQGSFMATIAEGLTLAQVTGQSQQTLLDILNQGQLASIFLDQKCQNILQGNFKPDFYLKYIQKDLRLAIALGDAVNHPTPMAAAANEVYKRAKALDQSDNDMSAVYRAYIH</sequence>
<gene>
    <name type="primary">GLYR1</name>
    <name type="synonym">NP60</name>
</gene>
<comment type="function">
    <text evidence="1">Cytokine-like nuclear factor with chromatin gene reader activity involved in chromatin modification and regulation of gene expression. Acts as a nucleosome-destabilizing factor that is recruited to genes during transcriptional activation. Recognizes and binds histone H3 without a preference for specific epigenetic markers and also binds DNA. Interacts with KDM1B and promotes its histone demethylase activity by facilitating the capture of H3 tails, they form a multifunctional enzyme complex that modifies transcribed chromatin and facilitates Pol II transcription through nucleosomes. Stimulates the acetylation of 'Lys-56' of nucleosomal histone H3 (H3K56ac) by EP300. With GATA4, co-binds a defined set of heart development genes and coregulates their expression during cardiomyocyte differentiation. Regulates p38 MAP kinase activity by mediating stress activation of MAPK14/p38alpha and specifically regulating MAPK14 signaling. Indirectly promotes phosphorylation of MAPK14 and activation of ATF2. The phosphorylation of MAPK14 requires upstream activity of MAP2K4 and MAP2K6.</text>
</comment>
<comment type="subunit">
    <text evidence="1">Homotetramere. Interacts with MAPK14. Interacts with KDM1B at nucleosomes; this interaction stimulates H3K4me1 and H3K4me2 demethylation. Binds to mononucleosomes. Interacts with GATA4; the interaction is required for a synergistic activation of GATA4 target genes transcription.</text>
</comment>
<comment type="subcellular location">
    <subcellularLocation>
        <location evidence="1">Nucleus</location>
    </subcellularLocation>
    <subcellularLocation>
        <location evidence="1">Chromosome</location>
    </subcellularLocation>
    <text evidence="1">Found in actively RNAPolII-transcribed gene bodies.</text>
</comment>
<comment type="alternative products">
    <event type="alternative splicing"/>
    <isoform>
        <id>A4FUF0-1</id>
        <name>1</name>
        <sequence type="displayed"/>
    </isoform>
    <isoform>
        <id>A4FUF0-2</id>
        <name>2</name>
        <sequence type="described" ref="VSP_029705"/>
    </isoform>
</comment>
<comment type="domain">
    <text evidence="1">The A.T hook DNA-binding domain is required for the interaction with MAPK14.</text>
</comment>
<comment type="domain">
    <text evidence="1">The PWWP domain is a H3 reader and strongly binds DNA.</text>
</comment>
<comment type="domain">
    <text evidence="1">In the dehydrogenase domain, the conserved NAD(P)H-binding sites and sequence similarity to plant dehydrogenases suggest that this protein may have oxidoreductase activity. However, since the active site is not conserved, the dehydrogenase domain seems to serve as a catalytically inert oligomerization module.</text>
</comment>
<comment type="similarity">
    <text evidence="5">Belongs to the HIBADH-related family. NP60 subfamily.</text>
</comment>
<protein>
    <recommendedName>
        <fullName>Cytokine-like nuclear factor N-PAC</fullName>
        <shortName>NPAC</shortName>
    </recommendedName>
    <alternativeName>
        <fullName>Glyoxylate reductase 1 homolog</fullName>
    </alternativeName>
    <alternativeName>
        <fullName>Nuclear protein NP60</fullName>
    </alternativeName>
    <alternativeName>
        <fullName>Putative oxidoreductase GLYR1</fullName>
    </alternativeName>
</protein>
<keyword id="KW-0025">Alternative splicing</keyword>
<keyword id="KW-0158">Chromosome</keyword>
<keyword id="KW-0238">DNA-binding</keyword>
<keyword id="KW-1017">Isopeptide bond</keyword>
<keyword id="KW-0539">Nucleus</keyword>
<keyword id="KW-0597">Phosphoprotein</keyword>
<keyword id="KW-1185">Reference proteome</keyword>
<keyword id="KW-0832">Ubl conjugation</keyword>
<feature type="chain" id="PRO_0000312120" description="Cytokine-like nuclear factor N-PAC">
    <location>
        <begin position="1"/>
        <end position="553"/>
    </location>
</feature>
<feature type="domain" description="PWWP" evidence="2">
    <location>
        <begin position="8"/>
        <end position="66"/>
    </location>
</feature>
<feature type="DNA-binding region" description="A.T hook" evidence="5">
    <location>
        <begin position="168"/>
        <end position="180"/>
    </location>
</feature>
<feature type="region of interest" description="Disordered" evidence="3">
    <location>
        <begin position="92"/>
        <end position="190"/>
    </location>
</feature>
<feature type="region of interest" description="Interaction with histone H3" evidence="1">
    <location>
        <begin position="214"/>
        <end position="217"/>
    </location>
</feature>
<feature type="region of interest" description="Interaction with KDM1B" evidence="1">
    <location>
        <begin position="216"/>
        <end position="225"/>
    </location>
</feature>
<feature type="region of interest" description="Dehydrogenase domain" evidence="1">
    <location>
        <begin position="261"/>
        <end position="553"/>
    </location>
</feature>
<feature type="compositionally biased region" description="Basic and acidic residues" evidence="3">
    <location>
        <begin position="92"/>
        <end position="145"/>
    </location>
</feature>
<feature type="compositionally biased region" description="Basic and acidic residues" evidence="3">
    <location>
        <begin position="162"/>
        <end position="182"/>
    </location>
</feature>
<feature type="binding site" evidence="1">
    <location>
        <begin position="271"/>
        <end position="285"/>
    </location>
    <ligand>
        <name>NAD(+)</name>
        <dbReference type="ChEBI" id="CHEBI:57540"/>
    </ligand>
</feature>
<feature type="binding site" evidence="1">
    <location>
        <position position="362"/>
    </location>
    <ligand>
        <name>NAD(+)</name>
        <dbReference type="ChEBI" id="CHEBI:57540"/>
    </ligand>
</feature>
<feature type="binding site" evidence="1">
    <location>
        <position position="505"/>
    </location>
    <ligand>
        <name>NAD(+)</name>
        <dbReference type="ChEBI" id="CHEBI:57540"/>
    </ligand>
</feature>
<feature type="site" description="Required to promote KDM1B demethylase activity toward histone H3K4me1 and H3K4me2" evidence="1">
    <location>
        <position position="217"/>
    </location>
</feature>
<feature type="modified residue" description="Phosphoserine" evidence="1">
    <location>
        <position position="130"/>
    </location>
</feature>
<feature type="modified residue" description="Phosphoserine" evidence="1">
    <location>
        <position position="167"/>
    </location>
</feature>
<feature type="modified residue" description="Phosphoserine" evidence="1">
    <location>
        <position position="540"/>
    </location>
</feature>
<feature type="cross-link" description="Glycyl lysine isopeptide (Lys-Gly) (interchain with G-Cter in SUMO2)" evidence="1">
    <location>
        <position position="135"/>
    </location>
</feature>
<feature type="cross-link" description="Glycyl lysine isopeptide (Lys-Gly) (interchain with G-Cter in SUMO2)" evidence="1">
    <location>
        <position position="176"/>
    </location>
</feature>
<feature type="cross-link" description="Glycyl lysine isopeptide (Lys-Gly) (interchain with G-Cter in SUMO2)" evidence="1">
    <location>
        <position position="179"/>
    </location>
</feature>
<feature type="cross-link" description="Glycyl lysine isopeptide (Lys-Gly) (interchain with G-Cter in SUMO2)" evidence="1">
    <location>
        <position position="201"/>
    </location>
</feature>
<feature type="cross-link" description="Glycyl lysine isopeptide (Lys-Gly) (interchain with G-Cter in SUMO2)" evidence="1">
    <location>
        <position position="211"/>
    </location>
</feature>
<feature type="cross-link" description="Glycyl lysine isopeptide (Lys-Gly) (interchain with G-Cter in SUMO2)" evidence="1">
    <location>
        <position position="227"/>
    </location>
</feature>
<feature type="cross-link" description="Glycyl lysine isopeptide (Lys-Gly) (interchain with G-Cter in SUMO2)" evidence="1">
    <location>
        <position position="237"/>
    </location>
</feature>
<feature type="cross-link" description="Glycyl lysine isopeptide (Lys-Gly) (interchain with G-Cter in SUMO2)" evidence="1">
    <location>
        <position position="240"/>
    </location>
</feature>
<feature type="cross-link" description="Glycyl lysine isopeptide (Lys-Gly) (interchain with G-Cter in SUMO2)" evidence="1">
    <location>
        <position position="269"/>
    </location>
</feature>
<feature type="cross-link" description="Glycyl lysine isopeptide (Lys-Gly) (interchain with G-Cter in SUMO2)" evidence="1">
    <location>
        <position position="302"/>
    </location>
</feature>
<feature type="splice variant" id="VSP_029705" description="In isoform 2." evidence="4">
    <location>
        <begin position="270"/>
        <end position="553"/>
    </location>
</feature>
<reference key="1">
    <citation type="journal article" date="2005" name="BMC Genomics">
        <title>Characterization of 954 bovine full-CDS cDNA sequences.</title>
        <authorList>
            <person name="Harhay G.P."/>
            <person name="Sonstegard T.S."/>
            <person name="Keele J.W."/>
            <person name="Heaton M.P."/>
            <person name="Clawson M.L."/>
            <person name="Snelling W.M."/>
            <person name="Wiedmann R.T."/>
            <person name="Van Tassell C.P."/>
            <person name="Smith T.P.L."/>
        </authorList>
    </citation>
    <scope>NUCLEOTIDE SEQUENCE [LARGE SCALE MRNA] (ISOFORM 2)</scope>
</reference>
<reference key="2">
    <citation type="submission" date="2006-04" db="EMBL/GenBank/DDBJ databases">
        <authorList>
            <consortium name="NIH - Mammalian Gene Collection (MGC) project"/>
        </authorList>
    </citation>
    <scope>NUCLEOTIDE SEQUENCE [LARGE SCALE MRNA] (ISOFORM 1)</scope>
    <source>
        <strain>Hereford</strain>
        <tissue>Uterus</tissue>
    </source>
</reference>
<name>GLYR1_BOVIN</name>